<dbReference type="EMBL" id="CP001215">
    <property type="protein sequence ID" value="ACP15566.1"/>
    <property type="molecule type" value="Genomic_DNA"/>
</dbReference>
<dbReference type="RefSeq" id="WP_000470753.1">
    <property type="nucleotide sequence ID" value="NC_012581.1"/>
</dbReference>
<dbReference type="SMR" id="C3LIC5"/>
<dbReference type="GeneID" id="45020038"/>
<dbReference type="KEGG" id="bah:BAMEG_0004"/>
<dbReference type="HOGENOM" id="CLU_040267_0_1_9"/>
<dbReference type="GO" id="GO:0005737">
    <property type="term" value="C:cytoplasm"/>
    <property type="evidence" value="ECO:0007669"/>
    <property type="project" value="UniProtKB-SubCell"/>
</dbReference>
<dbReference type="GO" id="GO:0005524">
    <property type="term" value="F:ATP binding"/>
    <property type="evidence" value="ECO:0007669"/>
    <property type="project" value="UniProtKB-UniRule"/>
</dbReference>
<dbReference type="GO" id="GO:0003697">
    <property type="term" value="F:single-stranded DNA binding"/>
    <property type="evidence" value="ECO:0007669"/>
    <property type="project" value="UniProtKB-UniRule"/>
</dbReference>
<dbReference type="GO" id="GO:0006260">
    <property type="term" value="P:DNA replication"/>
    <property type="evidence" value="ECO:0007669"/>
    <property type="project" value="UniProtKB-UniRule"/>
</dbReference>
<dbReference type="GO" id="GO:0000731">
    <property type="term" value="P:DNA synthesis involved in DNA repair"/>
    <property type="evidence" value="ECO:0007669"/>
    <property type="project" value="TreeGrafter"/>
</dbReference>
<dbReference type="GO" id="GO:0006302">
    <property type="term" value="P:double-strand break repair"/>
    <property type="evidence" value="ECO:0007669"/>
    <property type="project" value="TreeGrafter"/>
</dbReference>
<dbReference type="GO" id="GO:0009432">
    <property type="term" value="P:SOS response"/>
    <property type="evidence" value="ECO:0007669"/>
    <property type="project" value="UniProtKB-UniRule"/>
</dbReference>
<dbReference type="CDD" id="cd03242">
    <property type="entry name" value="ABC_RecF"/>
    <property type="match status" value="1"/>
</dbReference>
<dbReference type="FunFam" id="1.20.1050.90:FF:000002">
    <property type="entry name" value="DNA replication and repair protein RecF"/>
    <property type="match status" value="1"/>
</dbReference>
<dbReference type="FunFam" id="3.40.50.300:FF:000400">
    <property type="entry name" value="DNA replication and repair protein RecF"/>
    <property type="match status" value="1"/>
</dbReference>
<dbReference type="Gene3D" id="3.40.50.300">
    <property type="entry name" value="P-loop containing nucleotide triphosphate hydrolases"/>
    <property type="match status" value="1"/>
</dbReference>
<dbReference type="Gene3D" id="1.20.1050.90">
    <property type="entry name" value="RecF/RecN/SMC, N-terminal domain"/>
    <property type="match status" value="1"/>
</dbReference>
<dbReference type="HAMAP" id="MF_00365">
    <property type="entry name" value="RecF"/>
    <property type="match status" value="1"/>
</dbReference>
<dbReference type="InterPro" id="IPR001238">
    <property type="entry name" value="DNA-binding_RecF"/>
</dbReference>
<dbReference type="InterPro" id="IPR018078">
    <property type="entry name" value="DNA-binding_RecF_CS"/>
</dbReference>
<dbReference type="InterPro" id="IPR027417">
    <property type="entry name" value="P-loop_NTPase"/>
</dbReference>
<dbReference type="InterPro" id="IPR003395">
    <property type="entry name" value="RecF/RecN/SMC_N"/>
</dbReference>
<dbReference type="InterPro" id="IPR042174">
    <property type="entry name" value="RecF_2"/>
</dbReference>
<dbReference type="NCBIfam" id="TIGR00611">
    <property type="entry name" value="recf"/>
    <property type="match status" value="1"/>
</dbReference>
<dbReference type="PANTHER" id="PTHR32182">
    <property type="entry name" value="DNA REPLICATION AND REPAIR PROTEIN RECF"/>
    <property type="match status" value="1"/>
</dbReference>
<dbReference type="PANTHER" id="PTHR32182:SF0">
    <property type="entry name" value="DNA REPLICATION AND REPAIR PROTEIN RECF"/>
    <property type="match status" value="1"/>
</dbReference>
<dbReference type="Pfam" id="PF02463">
    <property type="entry name" value="SMC_N"/>
    <property type="match status" value="1"/>
</dbReference>
<dbReference type="SUPFAM" id="SSF52540">
    <property type="entry name" value="P-loop containing nucleoside triphosphate hydrolases"/>
    <property type="match status" value="1"/>
</dbReference>
<dbReference type="PROSITE" id="PS00617">
    <property type="entry name" value="RECF_1"/>
    <property type="match status" value="1"/>
</dbReference>
<dbReference type="PROSITE" id="PS00618">
    <property type="entry name" value="RECF_2"/>
    <property type="match status" value="1"/>
</dbReference>
<feature type="chain" id="PRO_1000133672" description="DNA replication and repair protein RecF">
    <location>
        <begin position="1"/>
        <end position="375"/>
    </location>
</feature>
<feature type="binding site" evidence="1">
    <location>
        <begin position="30"/>
        <end position="37"/>
    </location>
    <ligand>
        <name>ATP</name>
        <dbReference type="ChEBI" id="CHEBI:30616"/>
    </ligand>
</feature>
<gene>
    <name evidence="1" type="primary">recF</name>
    <name type="ordered locus">BAMEG_0004</name>
</gene>
<accession>C3LIC5</accession>
<organism>
    <name type="scientific">Bacillus anthracis (strain CDC 684 / NRRL 3495)</name>
    <dbReference type="NCBI Taxonomy" id="568206"/>
    <lineage>
        <taxon>Bacteria</taxon>
        <taxon>Bacillati</taxon>
        <taxon>Bacillota</taxon>
        <taxon>Bacilli</taxon>
        <taxon>Bacillales</taxon>
        <taxon>Bacillaceae</taxon>
        <taxon>Bacillus</taxon>
        <taxon>Bacillus cereus group</taxon>
    </lineage>
</organism>
<keyword id="KW-0067">ATP-binding</keyword>
<keyword id="KW-0963">Cytoplasm</keyword>
<keyword id="KW-0227">DNA damage</keyword>
<keyword id="KW-0234">DNA repair</keyword>
<keyword id="KW-0235">DNA replication</keyword>
<keyword id="KW-0238">DNA-binding</keyword>
<keyword id="KW-0547">Nucleotide-binding</keyword>
<keyword id="KW-0742">SOS response</keyword>
<protein>
    <recommendedName>
        <fullName evidence="1">DNA replication and repair protein RecF</fullName>
    </recommendedName>
</protein>
<comment type="function">
    <text evidence="1">The RecF protein is involved in DNA metabolism; it is required for DNA replication and normal SOS inducibility. RecF binds preferentially to single-stranded, linear DNA. It also seems to bind ATP.</text>
</comment>
<comment type="subcellular location">
    <subcellularLocation>
        <location evidence="1">Cytoplasm</location>
    </subcellularLocation>
</comment>
<comment type="similarity">
    <text evidence="1">Belongs to the RecF family.</text>
</comment>
<name>RECF_BACAC</name>
<reference key="1">
    <citation type="submission" date="2008-10" db="EMBL/GenBank/DDBJ databases">
        <title>Genome sequence of Bacillus anthracis str. CDC 684.</title>
        <authorList>
            <person name="Dodson R.J."/>
            <person name="Munk A.C."/>
            <person name="Brettin T."/>
            <person name="Bruce D."/>
            <person name="Detter C."/>
            <person name="Tapia R."/>
            <person name="Han C."/>
            <person name="Sutton G."/>
            <person name="Sims D."/>
        </authorList>
    </citation>
    <scope>NUCLEOTIDE SEQUENCE [LARGE SCALE GENOMIC DNA]</scope>
    <source>
        <strain>CDC 684 / NRRL 3495</strain>
    </source>
</reference>
<sequence>MFISEIQLKNYRNYEKLELSFEDKVNVIIGENAQGKTNLMEAIYVLAMAKSHRTSNDRELIRWDEDFGQIKGKLQKRNSSLSLELNISKKGKKAKLNQLEQQKLSQYIGVMNVVMFAPEDLNLVKGSPQVRRRFLDMELGQIAPVYLYELSQYQKVLTQRNHLLKKMQGNSKNEETMLDVFTLQLIEHGTKILRKRFEFLHLLQEWAAPIHRGISRGLEELEIVYKPSVDVSESMDLSKIKEVYYESFQSVKQREIFRGTTLIGPHRDDLQFFVNSKNVQVFGSQGQQRTTALSLKLAEIELIYSEVKEYPILLLDDVLSELDDYRQSHLLNTIQGKVQTFVTTTSVDGIEHETLKEAKTIHVTNGTVDCEIDRA</sequence>
<evidence type="ECO:0000255" key="1">
    <source>
        <dbReference type="HAMAP-Rule" id="MF_00365"/>
    </source>
</evidence>
<proteinExistence type="inferred from homology"/>